<feature type="chain" id="PRO_0000422622" description="Replication protein A 70 kDa DNA-binding subunit C">
    <location>
        <begin position="1"/>
        <end position="951"/>
    </location>
</feature>
<feature type="DNA-binding region" description="OB">
    <location>
        <begin position="320"/>
        <end position="403"/>
    </location>
</feature>
<feature type="zinc finger region" description="C4-type" evidence="2">
    <location>
        <begin position="612"/>
        <end position="639"/>
    </location>
</feature>
<feature type="region of interest" description="Disordered" evidence="3">
    <location>
        <begin position="139"/>
        <end position="172"/>
    </location>
</feature>
<feature type="sequence conflict" description="In Ref. 6; AK073598." evidence="5" ref="6">
    <original>T</original>
    <variation>A</variation>
    <location>
        <position position="37"/>
    </location>
</feature>
<gene>
    <name type="primary">RPA1C</name>
    <name type="synonym">RPA70C</name>
    <name type="ordered locus">Os05g0111000</name>
    <name type="ordered locus">LOC_Os05g02040</name>
    <name type="ORF">OsJ_16860</name>
    <name type="ORF">P0016H04.11</name>
</gene>
<sequence>MEPQLTPGAVQAIAEHPDGTGTIQPVLQVVDVRPVTTKNAPPTPKPAERFRMMLSDGVNTQQSMLATALNPLVKDATLRPGTVVQLTDFMCNTIQGKRIIIVVKLDVLQNDCIVIGNPKHYEPKSLTKEQDPNLQASVAQTNNGTYSGGASMLGPSVAPRAEQAASNSSYGGPYNSAQGMLGSSIGRTVEPGPANVSAVGSYGAISAQNTTNANMMQPTSQLNIMNANTMQPTSQLNTMNANTMQPTSQLSSLNPNQNQRFAAPASGGVFGPPGNAYGQPSRPSYQQPPPVYMNRGPASRNDSATRIIPITALNPYQPKWTIKARVTAKSDIRHWSNARSSGTVFSFDLLDAQGGEIRAQCWKESADKFFGQIEVGRVYLISRGSLKPAQKKYNTLNHDYEITLDIGLSTVEVCSDDDNSIPRLQYNFRQISELENMANETIVDLLGVVTSVSPSATIMRKIGTETRKRSIQLKDLSGRSIEVTLWGNFCDAEGQQLQLQCDSGSNPIIAFKGARVGDFNGKSVSTIGSTQLIINPDFPEVERLRQWYMTEGKTAPCISLSREMLNMGRTDARKTIAQIKDENLGRLEKPDWITVKAAISHVTTESFCYPACPKLLPVGRQCNKKAINNGDGMWHCDRCDESFQNPEYRYMLRFQIQDHTGSTYASAFDEAGEQIFGRKAGELFSIRNVDQDDAQFAEIIEGVRWHLYLFKLKVKEETYNDEQSLKCTAVKVEKLDPSKESNVLLGAIDNLLLDPKGQSDLAPNAGFTDPVGGHGAPTSSNAYAMNTGGVNQFGQQASISAGMSTPLAATRNLQTCSICGANGHSAQICHVGADMDMQETSAGGSSMGNYNSIAGNGSSECYKCKQPGHYARDCPGQSTGGLECFKCKQPGHFSRDCPVQSTGGSECFKCKQPGHFARDCPGQSTGAQHQTYGNNVAASRGYNRQSFVGGY</sequence>
<accession>Q65XV7</accession>
<accession>A0A0P0WH26</accession>
<keyword id="KW-0227">DNA damage</keyword>
<keyword id="KW-0233">DNA recombination</keyword>
<keyword id="KW-0234">DNA repair</keyword>
<keyword id="KW-0235">DNA replication</keyword>
<keyword id="KW-0238">DNA-binding</keyword>
<keyword id="KW-0479">Metal-binding</keyword>
<keyword id="KW-0539">Nucleus</keyword>
<keyword id="KW-1185">Reference proteome</keyword>
<keyword id="KW-0862">Zinc</keyword>
<keyword id="KW-0863">Zinc-finger</keyword>
<reference key="1">
    <citation type="journal article" date="2005" name="Mol. Genet. Genomics">
        <title>A fine physical map of the rice chromosome 5.</title>
        <authorList>
            <person name="Cheng C.-H."/>
            <person name="Chung M.C."/>
            <person name="Liu S.-M."/>
            <person name="Chen S.-K."/>
            <person name="Kao F.Y."/>
            <person name="Lin S.-J."/>
            <person name="Hsiao S.-H."/>
            <person name="Tseng I.C."/>
            <person name="Hsing Y.-I.C."/>
            <person name="Wu H.-P."/>
            <person name="Chen C.-S."/>
            <person name="Shaw J.-F."/>
            <person name="Wu J."/>
            <person name="Matsumoto T."/>
            <person name="Sasaki T."/>
            <person name="Chen H.-C."/>
            <person name="Chow T.-Y."/>
        </authorList>
    </citation>
    <scope>NUCLEOTIDE SEQUENCE [LARGE SCALE GENOMIC DNA]</scope>
    <source>
        <strain>cv. Nipponbare</strain>
    </source>
</reference>
<reference key="2">
    <citation type="journal article" date="2005" name="Nature">
        <title>The map-based sequence of the rice genome.</title>
        <authorList>
            <consortium name="International rice genome sequencing project (IRGSP)"/>
        </authorList>
    </citation>
    <scope>NUCLEOTIDE SEQUENCE [LARGE SCALE GENOMIC DNA]</scope>
    <source>
        <strain>cv. Nipponbare</strain>
    </source>
</reference>
<reference key="3">
    <citation type="journal article" date="2008" name="Nucleic Acids Res.">
        <title>The rice annotation project database (RAP-DB): 2008 update.</title>
        <authorList>
            <consortium name="The rice annotation project (RAP)"/>
        </authorList>
    </citation>
    <scope>GENOME REANNOTATION</scope>
    <source>
        <strain>cv. Nipponbare</strain>
    </source>
</reference>
<reference key="4">
    <citation type="journal article" date="2013" name="Rice">
        <title>Improvement of the Oryza sativa Nipponbare reference genome using next generation sequence and optical map data.</title>
        <authorList>
            <person name="Kawahara Y."/>
            <person name="de la Bastide M."/>
            <person name="Hamilton J.P."/>
            <person name="Kanamori H."/>
            <person name="McCombie W.R."/>
            <person name="Ouyang S."/>
            <person name="Schwartz D.C."/>
            <person name="Tanaka T."/>
            <person name="Wu J."/>
            <person name="Zhou S."/>
            <person name="Childs K.L."/>
            <person name="Davidson R.M."/>
            <person name="Lin H."/>
            <person name="Quesada-Ocampo L."/>
            <person name="Vaillancourt B."/>
            <person name="Sakai H."/>
            <person name="Lee S.S."/>
            <person name="Kim J."/>
            <person name="Numa H."/>
            <person name="Itoh T."/>
            <person name="Buell C.R."/>
            <person name="Matsumoto T."/>
        </authorList>
    </citation>
    <scope>GENOME REANNOTATION</scope>
    <source>
        <strain>cv. Nipponbare</strain>
    </source>
</reference>
<reference key="5">
    <citation type="journal article" date="2005" name="PLoS Biol.">
        <title>The genomes of Oryza sativa: a history of duplications.</title>
        <authorList>
            <person name="Yu J."/>
            <person name="Wang J."/>
            <person name="Lin W."/>
            <person name="Li S."/>
            <person name="Li H."/>
            <person name="Zhou J."/>
            <person name="Ni P."/>
            <person name="Dong W."/>
            <person name="Hu S."/>
            <person name="Zeng C."/>
            <person name="Zhang J."/>
            <person name="Zhang Y."/>
            <person name="Li R."/>
            <person name="Xu Z."/>
            <person name="Li S."/>
            <person name="Li X."/>
            <person name="Zheng H."/>
            <person name="Cong L."/>
            <person name="Lin L."/>
            <person name="Yin J."/>
            <person name="Geng J."/>
            <person name="Li G."/>
            <person name="Shi J."/>
            <person name="Liu J."/>
            <person name="Lv H."/>
            <person name="Li J."/>
            <person name="Wang J."/>
            <person name="Deng Y."/>
            <person name="Ran L."/>
            <person name="Shi X."/>
            <person name="Wang X."/>
            <person name="Wu Q."/>
            <person name="Li C."/>
            <person name="Ren X."/>
            <person name="Wang J."/>
            <person name="Wang X."/>
            <person name="Li D."/>
            <person name="Liu D."/>
            <person name="Zhang X."/>
            <person name="Ji Z."/>
            <person name="Zhao W."/>
            <person name="Sun Y."/>
            <person name="Zhang Z."/>
            <person name="Bao J."/>
            <person name="Han Y."/>
            <person name="Dong L."/>
            <person name="Ji J."/>
            <person name="Chen P."/>
            <person name="Wu S."/>
            <person name="Liu J."/>
            <person name="Xiao Y."/>
            <person name="Bu D."/>
            <person name="Tan J."/>
            <person name="Yang L."/>
            <person name="Ye C."/>
            <person name="Zhang J."/>
            <person name="Xu J."/>
            <person name="Zhou Y."/>
            <person name="Yu Y."/>
            <person name="Zhang B."/>
            <person name="Zhuang S."/>
            <person name="Wei H."/>
            <person name="Liu B."/>
            <person name="Lei M."/>
            <person name="Yu H."/>
            <person name="Li Y."/>
            <person name="Xu H."/>
            <person name="Wei S."/>
            <person name="He X."/>
            <person name="Fang L."/>
            <person name="Zhang Z."/>
            <person name="Zhang Y."/>
            <person name="Huang X."/>
            <person name="Su Z."/>
            <person name="Tong W."/>
            <person name="Li J."/>
            <person name="Tong Z."/>
            <person name="Li S."/>
            <person name="Ye J."/>
            <person name="Wang L."/>
            <person name="Fang L."/>
            <person name="Lei T."/>
            <person name="Chen C.-S."/>
            <person name="Chen H.-C."/>
            <person name="Xu Z."/>
            <person name="Li H."/>
            <person name="Huang H."/>
            <person name="Zhang F."/>
            <person name="Xu H."/>
            <person name="Li N."/>
            <person name="Zhao C."/>
            <person name="Li S."/>
            <person name="Dong L."/>
            <person name="Huang Y."/>
            <person name="Li L."/>
            <person name="Xi Y."/>
            <person name="Qi Q."/>
            <person name="Li W."/>
            <person name="Zhang B."/>
            <person name="Hu W."/>
            <person name="Zhang Y."/>
            <person name="Tian X."/>
            <person name="Jiao Y."/>
            <person name="Liang X."/>
            <person name="Jin J."/>
            <person name="Gao L."/>
            <person name="Zheng W."/>
            <person name="Hao B."/>
            <person name="Liu S.-M."/>
            <person name="Wang W."/>
            <person name="Yuan L."/>
            <person name="Cao M."/>
            <person name="McDermott J."/>
            <person name="Samudrala R."/>
            <person name="Wang J."/>
            <person name="Wong G.K.-S."/>
            <person name="Yang H."/>
        </authorList>
    </citation>
    <scope>NUCLEOTIDE SEQUENCE [LARGE SCALE GENOMIC DNA]</scope>
    <source>
        <strain>cv. Nipponbare</strain>
    </source>
</reference>
<reference key="6">
    <citation type="journal article" date="2003" name="Science">
        <title>Collection, mapping, and annotation of over 28,000 cDNA clones from japonica rice.</title>
        <authorList>
            <consortium name="The rice full-length cDNA consortium"/>
        </authorList>
    </citation>
    <scope>NUCLEOTIDE SEQUENCE [LARGE SCALE MRNA]</scope>
    <source>
        <strain>cv. Nipponbare</strain>
    </source>
</reference>
<reference key="7">
    <citation type="journal article" date="2006" name="J. Biochem.">
        <title>A higher plant has three different types of RPA heterotrimeric complex.</title>
        <authorList>
            <person name="Ishibashi T."/>
            <person name="Kimura S."/>
            <person name="Sakaguchi K."/>
        </authorList>
    </citation>
    <scope>INTERACTION WITH RPA2C</scope>
</reference>
<name>RFA1C_ORYSJ</name>
<organism>
    <name type="scientific">Oryza sativa subsp. japonica</name>
    <name type="common">Rice</name>
    <dbReference type="NCBI Taxonomy" id="39947"/>
    <lineage>
        <taxon>Eukaryota</taxon>
        <taxon>Viridiplantae</taxon>
        <taxon>Streptophyta</taxon>
        <taxon>Embryophyta</taxon>
        <taxon>Tracheophyta</taxon>
        <taxon>Spermatophyta</taxon>
        <taxon>Magnoliopsida</taxon>
        <taxon>Liliopsida</taxon>
        <taxon>Poales</taxon>
        <taxon>Poaceae</taxon>
        <taxon>BOP clade</taxon>
        <taxon>Oryzoideae</taxon>
        <taxon>Oryzeae</taxon>
        <taxon>Oryzinae</taxon>
        <taxon>Oryza</taxon>
        <taxon>Oryza sativa</taxon>
    </lineage>
</organism>
<proteinExistence type="evidence at protein level"/>
<dbReference type="EMBL" id="AC079356">
    <property type="protein sequence ID" value="AAU44205.1"/>
    <property type="molecule type" value="Genomic_DNA"/>
</dbReference>
<dbReference type="EMBL" id="AP008211">
    <property type="protein sequence ID" value="BAF16359.1"/>
    <property type="molecule type" value="Genomic_DNA"/>
</dbReference>
<dbReference type="EMBL" id="AP014961">
    <property type="protein sequence ID" value="BAS91923.1"/>
    <property type="molecule type" value="Genomic_DNA"/>
</dbReference>
<dbReference type="EMBL" id="CM000142">
    <property type="protein sequence ID" value="EEE62076.1"/>
    <property type="molecule type" value="Genomic_DNA"/>
</dbReference>
<dbReference type="EMBL" id="AK073598">
    <property type="status" value="NOT_ANNOTATED_CDS"/>
    <property type="molecule type" value="mRNA"/>
</dbReference>
<dbReference type="RefSeq" id="XP_015638722.1">
    <property type="nucleotide sequence ID" value="XM_015783236.1"/>
</dbReference>
<dbReference type="SMR" id="Q65XV7"/>
<dbReference type="FunCoup" id="Q65XV7">
    <property type="interactions" value="2665"/>
</dbReference>
<dbReference type="IntAct" id="Q65XV7">
    <property type="interactions" value="1"/>
</dbReference>
<dbReference type="STRING" id="39947.Q65XV7"/>
<dbReference type="PaxDb" id="39947-Q65XV7"/>
<dbReference type="EnsemblPlants" id="Os05t0111000-01">
    <property type="protein sequence ID" value="Os05t0111000-01"/>
    <property type="gene ID" value="Os05g0111000"/>
</dbReference>
<dbReference type="Gramene" id="Os05t0111000-01">
    <property type="protein sequence ID" value="Os05t0111000-01"/>
    <property type="gene ID" value="Os05g0111000"/>
</dbReference>
<dbReference type="KEGG" id="dosa:Os05g0111000"/>
<dbReference type="eggNOG" id="KOG0851">
    <property type="taxonomic scope" value="Eukaryota"/>
</dbReference>
<dbReference type="eggNOG" id="KOG4400">
    <property type="taxonomic scope" value="Eukaryota"/>
</dbReference>
<dbReference type="HOGENOM" id="CLU_012393_3_0_1"/>
<dbReference type="InParanoid" id="Q65XV7"/>
<dbReference type="OMA" id="DCPGQST"/>
<dbReference type="OrthoDB" id="1751331at2759"/>
<dbReference type="PlantReactome" id="R-OSA-9645850">
    <property type="pathway name" value="Activation of pre-replication complex"/>
</dbReference>
<dbReference type="PlantReactome" id="R-OSA-9675782">
    <property type="pathway name" value="Maturation"/>
</dbReference>
<dbReference type="PlantReactome" id="R-OSA-9675885">
    <property type="pathway name" value="Lagging strand synthesis"/>
</dbReference>
<dbReference type="Proteomes" id="UP000000763">
    <property type="component" value="Chromosome 5"/>
</dbReference>
<dbReference type="Proteomes" id="UP000007752">
    <property type="component" value="Chromosome 5"/>
</dbReference>
<dbReference type="Proteomes" id="UP000059680">
    <property type="component" value="Chromosome 5"/>
</dbReference>
<dbReference type="GO" id="GO:0005662">
    <property type="term" value="C:DNA replication factor A complex"/>
    <property type="evidence" value="ECO:0000318"/>
    <property type="project" value="GO_Central"/>
</dbReference>
<dbReference type="GO" id="GO:0003684">
    <property type="term" value="F:damaged DNA binding"/>
    <property type="evidence" value="ECO:0000318"/>
    <property type="project" value="GO_Central"/>
</dbReference>
<dbReference type="GO" id="GO:0043047">
    <property type="term" value="F:single-stranded telomeric DNA binding"/>
    <property type="evidence" value="ECO:0000318"/>
    <property type="project" value="GO_Central"/>
</dbReference>
<dbReference type="GO" id="GO:0008270">
    <property type="term" value="F:zinc ion binding"/>
    <property type="evidence" value="ECO:0007669"/>
    <property type="project" value="UniProtKB-KW"/>
</dbReference>
<dbReference type="GO" id="GO:0006260">
    <property type="term" value="P:DNA replication"/>
    <property type="evidence" value="ECO:0000318"/>
    <property type="project" value="GO_Central"/>
</dbReference>
<dbReference type="GO" id="GO:0000724">
    <property type="term" value="P:double-strand break repair via homologous recombination"/>
    <property type="evidence" value="ECO:0000318"/>
    <property type="project" value="GO_Central"/>
</dbReference>
<dbReference type="GO" id="GO:0051321">
    <property type="term" value="P:meiotic cell cycle"/>
    <property type="evidence" value="ECO:0000318"/>
    <property type="project" value="GO_Central"/>
</dbReference>
<dbReference type="GO" id="GO:0006289">
    <property type="term" value="P:nucleotide-excision repair"/>
    <property type="evidence" value="ECO:0000318"/>
    <property type="project" value="GO_Central"/>
</dbReference>
<dbReference type="GO" id="GO:0007004">
    <property type="term" value="P:telomere maintenance via telomerase"/>
    <property type="evidence" value="ECO:0000318"/>
    <property type="project" value="GO_Central"/>
</dbReference>
<dbReference type="CDD" id="cd04474">
    <property type="entry name" value="RPA1_DBD_A"/>
    <property type="match status" value="1"/>
</dbReference>
<dbReference type="CDD" id="cd04475">
    <property type="entry name" value="RPA1_DBD_B"/>
    <property type="match status" value="1"/>
</dbReference>
<dbReference type="CDD" id="cd04476">
    <property type="entry name" value="RPA1_DBD_C"/>
    <property type="match status" value="1"/>
</dbReference>
<dbReference type="CDD" id="cd04477">
    <property type="entry name" value="RPA1N"/>
    <property type="match status" value="1"/>
</dbReference>
<dbReference type="FunFam" id="2.40.50.140:FF:000041">
    <property type="entry name" value="Replication protein A subunit"/>
    <property type="match status" value="1"/>
</dbReference>
<dbReference type="FunFam" id="2.40.50.140:FF:000064">
    <property type="entry name" value="Replication protein A subunit"/>
    <property type="match status" value="1"/>
</dbReference>
<dbReference type="FunFam" id="2.40.50.140:FF:000090">
    <property type="entry name" value="Replication protein A subunit"/>
    <property type="match status" value="1"/>
</dbReference>
<dbReference type="FunFam" id="2.40.50.140:FF:000117">
    <property type="entry name" value="Replication protein A subunit"/>
    <property type="match status" value="1"/>
</dbReference>
<dbReference type="FunFam" id="4.10.60.10:FF:000148">
    <property type="entry name" value="Replication protein A subunit"/>
    <property type="match status" value="1"/>
</dbReference>
<dbReference type="Gene3D" id="2.40.50.140">
    <property type="entry name" value="Nucleic acid-binding proteins"/>
    <property type="match status" value="4"/>
</dbReference>
<dbReference type="Gene3D" id="4.10.60.10">
    <property type="entry name" value="Zinc finger, CCHC-type"/>
    <property type="match status" value="3"/>
</dbReference>
<dbReference type="InterPro" id="IPR047192">
    <property type="entry name" value="Euk_RPA1_DBD_C"/>
</dbReference>
<dbReference type="InterPro" id="IPR012340">
    <property type="entry name" value="NA-bd_OB-fold"/>
</dbReference>
<dbReference type="InterPro" id="IPR004365">
    <property type="entry name" value="NA-bd_OB_tRNA"/>
</dbReference>
<dbReference type="InterPro" id="IPR013955">
    <property type="entry name" value="Rep_factor-A_C"/>
</dbReference>
<dbReference type="InterPro" id="IPR007199">
    <property type="entry name" value="Rep_factor-A_N"/>
</dbReference>
<dbReference type="InterPro" id="IPR031657">
    <property type="entry name" value="REPA_OB_2"/>
</dbReference>
<dbReference type="InterPro" id="IPR004591">
    <property type="entry name" value="Rfa1"/>
</dbReference>
<dbReference type="InterPro" id="IPR001878">
    <property type="entry name" value="Znf_CCHC"/>
</dbReference>
<dbReference type="InterPro" id="IPR036875">
    <property type="entry name" value="Znf_CCHC_sf"/>
</dbReference>
<dbReference type="NCBIfam" id="TIGR00617">
    <property type="entry name" value="rpa1"/>
    <property type="match status" value="1"/>
</dbReference>
<dbReference type="PANTHER" id="PTHR47165">
    <property type="entry name" value="OS03G0429900 PROTEIN"/>
    <property type="match status" value="1"/>
</dbReference>
<dbReference type="PANTHER" id="PTHR47165:SF4">
    <property type="entry name" value="OS03G0429900 PROTEIN"/>
    <property type="match status" value="1"/>
</dbReference>
<dbReference type="Pfam" id="PF04057">
    <property type="entry name" value="Rep-A_N"/>
    <property type="match status" value="1"/>
</dbReference>
<dbReference type="Pfam" id="PF08646">
    <property type="entry name" value="Rep_fac-A_C"/>
    <property type="match status" value="1"/>
</dbReference>
<dbReference type="Pfam" id="PF16900">
    <property type="entry name" value="REPA_OB_2"/>
    <property type="match status" value="1"/>
</dbReference>
<dbReference type="Pfam" id="PF01336">
    <property type="entry name" value="tRNA_anti-codon"/>
    <property type="match status" value="1"/>
</dbReference>
<dbReference type="Pfam" id="PF00098">
    <property type="entry name" value="zf-CCHC"/>
    <property type="match status" value="3"/>
</dbReference>
<dbReference type="SMART" id="SM00343">
    <property type="entry name" value="ZnF_C2HC"/>
    <property type="match status" value="4"/>
</dbReference>
<dbReference type="SUPFAM" id="SSF50249">
    <property type="entry name" value="Nucleic acid-binding proteins"/>
    <property type="match status" value="4"/>
</dbReference>
<dbReference type="SUPFAM" id="SSF57756">
    <property type="entry name" value="Retrovirus zinc finger-like domains"/>
    <property type="match status" value="2"/>
</dbReference>
<dbReference type="PROSITE" id="PS50158">
    <property type="entry name" value="ZF_CCHC"/>
    <property type="match status" value="3"/>
</dbReference>
<comment type="function">
    <text evidence="1">Component of the replication protein A complex (RPA) required for DNA recombination, repair and replication. The activity of RPA is mediated by single-stranded DNA binding and protein interactions. Probably involved in repair of double-strand DNA breaks (DSBs) induced by genotoxic stresses (By similarity).</text>
</comment>
<comment type="subunit">
    <text evidence="1 4">Heterotrimer of RPA1, RPA2 and RPA3 (canonical replication protein A complex) (By similarity). Interacts with RPA2C.</text>
</comment>
<comment type="interaction">
    <interactant intactId="EBI-849558">
        <id>Q65XV7</id>
    </interactant>
    <interactant intactId="EBI-849544">
        <id>Q5Z8L1</id>
        <label>RPA2C</label>
    </interactant>
    <organismsDiffer>false</organismsDiffer>
    <experiments>4</experiments>
</comment>
<comment type="subcellular location">
    <subcellularLocation>
        <location evidence="1">Nucleus</location>
    </subcellularLocation>
</comment>
<comment type="similarity">
    <text evidence="5">Belongs to the replication factor A protein 1 family.</text>
</comment>
<evidence type="ECO:0000250" key="1"/>
<evidence type="ECO:0000255" key="2"/>
<evidence type="ECO:0000256" key="3">
    <source>
        <dbReference type="SAM" id="MobiDB-lite"/>
    </source>
</evidence>
<evidence type="ECO:0000269" key="4">
    <source>
    </source>
</evidence>
<evidence type="ECO:0000305" key="5"/>
<protein>
    <recommendedName>
        <fullName>Replication protein A 70 kDa DNA-binding subunit C</fullName>
        <shortName>OsRPA70c</shortName>
    </recommendedName>
    <alternativeName>
        <fullName>Replication factor A protein 1C</fullName>
    </alternativeName>
    <alternativeName>
        <fullName>Replication protein A 1C</fullName>
    </alternativeName>
</protein>